<protein>
    <recommendedName>
        <fullName evidence="1">Lipoprotein signal peptidase</fullName>
        <ecNumber evidence="1">3.4.23.36</ecNumber>
    </recommendedName>
    <alternativeName>
        <fullName evidence="1">Prolipoprotein signal peptidase</fullName>
    </alternativeName>
    <alternativeName>
        <fullName evidence="1">Signal peptidase II</fullName>
        <shortName evidence="1">SPase II</shortName>
    </alternativeName>
</protein>
<proteinExistence type="inferred from homology"/>
<gene>
    <name evidence="1" type="primary">lspA</name>
    <name type="ordered locus">BA_4032</name>
    <name type="ordered locus">GBAA_4032</name>
    <name type="ordered locus">BAS3744</name>
</gene>
<feature type="chain" id="PRO_0000289349" description="Lipoprotein signal peptidase">
    <location>
        <begin position="1"/>
        <end position="152"/>
    </location>
</feature>
<feature type="transmembrane region" description="Helical" evidence="1">
    <location>
        <begin position="55"/>
        <end position="75"/>
    </location>
</feature>
<feature type="transmembrane region" description="Helical" evidence="1">
    <location>
        <begin position="85"/>
        <end position="105"/>
    </location>
</feature>
<feature type="transmembrane region" description="Helical" evidence="1">
    <location>
        <begin position="124"/>
        <end position="144"/>
    </location>
</feature>
<feature type="active site" evidence="1">
    <location>
        <position position="111"/>
    </location>
</feature>
<feature type="active site" evidence="1">
    <location>
        <position position="129"/>
    </location>
</feature>
<dbReference type="EC" id="3.4.23.36" evidence="1"/>
<dbReference type="EMBL" id="AE016879">
    <property type="protein sequence ID" value="AAP27758.1"/>
    <property type="molecule type" value="Genomic_DNA"/>
</dbReference>
<dbReference type="EMBL" id="AE017225">
    <property type="protein sequence ID" value="AAT56046.1"/>
    <property type="molecule type" value="Genomic_DNA"/>
</dbReference>
<dbReference type="EMBL" id="AE017334">
    <property type="protein sequence ID" value="AAT33149.1"/>
    <property type="molecule type" value="Genomic_DNA"/>
</dbReference>
<dbReference type="RefSeq" id="NP_846272.1">
    <property type="nucleotide sequence ID" value="NC_003997.3"/>
</dbReference>
<dbReference type="RefSeq" id="WP_000642181.1">
    <property type="nucleotide sequence ID" value="NZ_WXXJ01000026.1"/>
</dbReference>
<dbReference type="RefSeq" id="YP_029995.1">
    <property type="nucleotide sequence ID" value="NC_005945.1"/>
</dbReference>
<dbReference type="SMR" id="Q81WE6"/>
<dbReference type="STRING" id="261594.GBAA_4032"/>
<dbReference type="DNASU" id="1086123"/>
<dbReference type="GeneID" id="45023722"/>
<dbReference type="KEGG" id="ban:BA_4032"/>
<dbReference type="KEGG" id="bar:GBAA_4032"/>
<dbReference type="KEGG" id="bat:BAS3744"/>
<dbReference type="PATRIC" id="fig|198094.11.peg.4003"/>
<dbReference type="eggNOG" id="COG0597">
    <property type="taxonomic scope" value="Bacteria"/>
</dbReference>
<dbReference type="HOGENOM" id="CLU_083252_3_0_9"/>
<dbReference type="OMA" id="NRWYFPA"/>
<dbReference type="OrthoDB" id="9810259at2"/>
<dbReference type="UniPathway" id="UPA00665"/>
<dbReference type="Proteomes" id="UP000000427">
    <property type="component" value="Chromosome"/>
</dbReference>
<dbReference type="Proteomes" id="UP000000594">
    <property type="component" value="Chromosome"/>
</dbReference>
<dbReference type="GO" id="GO:0005886">
    <property type="term" value="C:plasma membrane"/>
    <property type="evidence" value="ECO:0007669"/>
    <property type="project" value="UniProtKB-SubCell"/>
</dbReference>
<dbReference type="GO" id="GO:0004190">
    <property type="term" value="F:aspartic-type endopeptidase activity"/>
    <property type="evidence" value="ECO:0007669"/>
    <property type="project" value="UniProtKB-UniRule"/>
</dbReference>
<dbReference type="GO" id="GO:0006508">
    <property type="term" value="P:proteolysis"/>
    <property type="evidence" value="ECO:0007669"/>
    <property type="project" value="UniProtKB-KW"/>
</dbReference>
<dbReference type="HAMAP" id="MF_00161">
    <property type="entry name" value="LspA"/>
    <property type="match status" value="1"/>
</dbReference>
<dbReference type="InterPro" id="IPR001872">
    <property type="entry name" value="Peptidase_A8"/>
</dbReference>
<dbReference type="NCBIfam" id="TIGR00077">
    <property type="entry name" value="lspA"/>
    <property type="match status" value="1"/>
</dbReference>
<dbReference type="PANTHER" id="PTHR33695">
    <property type="entry name" value="LIPOPROTEIN SIGNAL PEPTIDASE"/>
    <property type="match status" value="1"/>
</dbReference>
<dbReference type="PANTHER" id="PTHR33695:SF1">
    <property type="entry name" value="LIPOPROTEIN SIGNAL PEPTIDASE"/>
    <property type="match status" value="1"/>
</dbReference>
<dbReference type="Pfam" id="PF01252">
    <property type="entry name" value="Peptidase_A8"/>
    <property type="match status" value="1"/>
</dbReference>
<dbReference type="PRINTS" id="PR00781">
    <property type="entry name" value="LIPOSIGPTASE"/>
</dbReference>
<dbReference type="PROSITE" id="PS00855">
    <property type="entry name" value="SPASE_II"/>
    <property type="match status" value="1"/>
</dbReference>
<reference key="1">
    <citation type="journal article" date="2003" name="Nature">
        <title>The genome sequence of Bacillus anthracis Ames and comparison to closely related bacteria.</title>
        <authorList>
            <person name="Read T.D."/>
            <person name="Peterson S.N."/>
            <person name="Tourasse N.J."/>
            <person name="Baillie L.W."/>
            <person name="Paulsen I.T."/>
            <person name="Nelson K.E."/>
            <person name="Tettelin H."/>
            <person name="Fouts D.E."/>
            <person name="Eisen J.A."/>
            <person name="Gill S.R."/>
            <person name="Holtzapple E.K."/>
            <person name="Okstad O.A."/>
            <person name="Helgason E."/>
            <person name="Rilstone J."/>
            <person name="Wu M."/>
            <person name="Kolonay J.F."/>
            <person name="Beanan M.J."/>
            <person name="Dodson R.J."/>
            <person name="Brinkac L.M."/>
            <person name="Gwinn M.L."/>
            <person name="DeBoy R.T."/>
            <person name="Madpu R."/>
            <person name="Daugherty S.C."/>
            <person name="Durkin A.S."/>
            <person name="Haft D.H."/>
            <person name="Nelson W.C."/>
            <person name="Peterson J.D."/>
            <person name="Pop M."/>
            <person name="Khouri H.M."/>
            <person name="Radune D."/>
            <person name="Benton J.L."/>
            <person name="Mahamoud Y."/>
            <person name="Jiang L."/>
            <person name="Hance I.R."/>
            <person name="Weidman J.F."/>
            <person name="Berry K.J."/>
            <person name="Plaut R.D."/>
            <person name="Wolf A.M."/>
            <person name="Watkins K.L."/>
            <person name="Nierman W.C."/>
            <person name="Hazen A."/>
            <person name="Cline R.T."/>
            <person name="Redmond C."/>
            <person name="Thwaite J.E."/>
            <person name="White O."/>
            <person name="Salzberg S.L."/>
            <person name="Thomason B."/>
            <person name="Friedlander A.M."/>
            <person name="Koehler T.M."/>
            <person name="Hanna P.C."/>
            <person name="Kolstoe A.-B."/>
            <person name="Fraser C.M."/>
        </authorList>
    </citation>
    <scope>NUCLEOTIDE SEQUENCE [LARGE SCALE GENOMIC DNA]</scope>
    <source>
        <strain>Ames / isolate Porton</strain>
    </source>
</reference>
<reference key="2">
    <citation type="submission" date="2004-01" db="EMBL/GenBank/DDBJ databases">
        <title>Complete genome sequence of Bacillus anthracis Sterne.</title>
        <authorList>
            <person name="Brettin T.S."/>
            <person name="Bruce D."/>
            <person name="Challacombe J.F."/>
            <person name="Gilna P."/>
            <person name="Han C."/>
            <person name="Hill K."/>
            <person name="Hitchcock P."/>
            <person name="Jackson P."/>
            <person name="Keim P."/>
            <person name="Longmire J."/>
            <person name="Lucas S."/>
            <person name="Okinaka R."/>
            <person name="Richardson P."/>
            <person name="Rubin E."/>
            <person name="Tice H."/>
        </authorList>
    </citation>
    <scope>NUCLEOTIDE SEQUENCE [LARGE SCALE GENOMIC DNA]</scope>
    <source>
        <strain>Sterne</strain>
    </source>
</reference>
<reference key="3">
    <citation type="journal article" date="2009" name="J. Bacteriol.">
        <title>The complete genome sequence of Bacillus anthracis Ames 'Ancestor'.</title>
        <authorList>
            <person name="Ravel J."/>
            <person name="Jiang L."/>
            <person name="Stanley S.T."/>
            <person name="Wilson M.R."/>
            <person name="Decker R.S."/>
            <person name="Read T.D."/>
            <person name="Worsham P."/>
            <person name="Keim P.S."/>
            <person name="Salzberg S.L."/>
            <person name="Fraser-Liggett C.M."/>
            <person name="Rasko D.A."/>
        </authorList>
    </citation>
    <scope>NUCLEOTIDE SEQUENCE [LARGE SCALE GENOMIC DNA]</scope>
    <source>
        <strain>Ames ancestor</strain>
    </source>
</reference>
<sequence length="152" mass="17454">MIYYVIALFVIAIDQISKWLIVKNMELGTSIPIIDNVLYITSHRNRGAAWGILENKMWFFYIITVVFVVFIVFYMKKYAKTDKLLGISLGLILGGAIGNFIDRVFRQEVVDFIHVYIFSYNYPVFNIADSALCIGVVLIIIQTLLEGKKTKE</sequence>
<accession>Q81WE6</accession>
<accession>Q6HUJ3</accession>
<accession>Q6KNS9</accession>
<evidence type="ECO:0000255" key="1">
    <source>
        <dbReference type="HAMAP-Rule" id="MF_00161"/>
    </source>
</evidence>
<comment type="function">
    <text evidence="1">This protein specifically catalyzes the removal of signal peptides from prolipoproteins.</text>
</comment>
<comment type="catalytic activity">
    <reaction evidence="1">
        <text>Release of signal peptides from bacterial membrane prolipoproteins. Hydrolyzes -Xaa-Yaa-Zaa-|-(S,diacylglyceryl)Cys-, in which Xaa is hydrophobic (preferably Leu), and Yaa (Ala or Ser) and Zaa (Gly or Ala) have small, neutral side chains.</text>
        <dbReference type="EC" id="3.4.23.36"/>
    </reaction>
</comment>
<comment type="pathway">
    <text evidence="1">Protein modification; lipoprotein biosynthesis (signal peptide cleavage).</text>
</comment>
<comment type="subcellular location">
    <subcellularLocation>
        <location evidence="1">Cell membrane</location>
        <topology evidence="1">Multi-pass membrane protein</topology>
    </subcellularLocation>
</comment>
<comment type="similarity">
    <text evidence="1">Belongs to the peptidase A8 family.</text>
</comment>
<keyword id="KW-0064">Aspartyl protease</keyword>
<keyword id="KW-1003">Cell membrane</keyword>
<keyword id="KW-0378">Hydrolase</keyword>
<keyword id="KW-0472">Membrane</keyword>
<keyword id="KW-0645">Protease</keyword>
<keyword id="KW-1185">Reference proteome</keyword>
<keyword id="KW-0812">Transmembrane</keyword>
<keyword id="KW-1133">Transmembrane helix</keyword>
<organism>
    <name type="scientific">Bacillus anthracis</name>
    <dbReference type="NCBI Taxonomy" id="1392"/>
    <lineage>
        <taxon>Bacteria</taxon>
        <taxon>Bacillati</taxon>
        <taxon>Bacillota</taxon>
        <taxon>Bacilli</taxon>
        <taxon>Bacillales</taxon>
        <taxon>Bacillaceae</taxon>
        <taxon>Bacillus</taxon>
        <taxon>Bacillus cereus group</taxon>
    </lineage>
</organism>
<name>LSPA_BACAN</name>